<dbReference type="EMBL" id="Z81356">
    <property type="protein sequence ID" value="CAB03685.1"/>
    <property type="molecule type" value="Genomic_DNA"/>
</dbReference>
<dbReference type="EMBL" id="AL009126">
    <property type="protein sequence ID" value="CAB15685.3"/>
    <property type="molecule type" value="Genomic_DNA"/>
</dbReference>
<dbReference type="PIR" id="B70063">
    <property type="entry name" value="B70063"/>
</dbReference>
<dbReference type="RefSeq" id="NP_391549.2">
    <property type="nucleotide sequence ID" value="NC_000964.3"/>
</dbReference>
<dbReference type="RefSeq" id="WP_003244390.1">
    <property type="nucleotide sequence ID" value="NZ_OZ025638.1"/>
</dbReference>
<dbReference type="RefSeq" id="WP_010886630.1">
    <property type="nucleotide sequence ID" value="NC_000964.3"/>
</dbReference>
<dbReference type="SMR" id="P70963"/>
<dbReference type="FunCoup" id="P70963">
    <property type="interactions" value="35"/>
</dbReference>
<dbReference type="STRING" id="224308.BSU36680"/>
<dbReference type="PaxDb" id="224308-BSU36680"/>
<dbReference type="EnsemblBacteria" id="CAB15685">
    <property type="protein sequence ID" value="CAB15685"/>
    <property type="gene ID" value="BSU_36680"/>
</dbReference>
<dbReference type="GeneID" id="936974"/>
<dbReference type="KEGG" id="bsu:BSU36680"/>
<dbReference type="PATRIC" id="fig|224308.179.peg.3971"/>
<dbReference type="eggNOG" id="COG1994">
    <property type="taxonomic scope" value="Bacteria"/>
</dbReference>
<dbReference type="InParanoid" id="P70963"/>
<dbReference type="OrthoDB" id="849477at2"/>
<dbReference type="BioCyc" id="BSUB:BSU36680-MONOMER"/>
<dbReference type="Proteomes" id="UP000001570">
    <property type="component" value="Chromosome"/>
</dbReference>
<dbReference type="GO" id="GO:0005886">
    <property type="term" value="C:plasma membrane"/>
    <property type="evidence" value="ECO:0007669"/>
    <property type="project" value="UniProtKB-SubCell"/>
</dbReference>
<name>YWMF_BACSU</name>
<protein>
    <recommendedName>
        <fullName>Uncharacterized membrane protein YwmF</fullName>
    </recommendedName>
</protein>
<accession>P70963</accession>
<feature type="chain" id="PRO_0000049986" description="Uncharacterized membrane protein YwmF">
    <location>
        <begin position="1"/>
        <end position="159"/>
    </location>
</feature>
<feature type="transmembrane region" description="Helical" evidence="1">
    <location>
        <begin position="16"/>
        <end position="36"/>
    </location>
</feature>
<feature type="transmembrane region" description="Helical" evidence="1">
    <location>
        <begin position="84"/>
        <end position="104"/>
    </location>
</feature>
<feature type="transmembrane region" description="Helical" evidence="1">
    <location>
        <begin position="112"/>
        <end position="132"/>
    </location>
</feature>
<sequence length="159" mass="18431">MFGFNDMVKFLWSFLIVLPLVQIIHVSGHSFMAFIFGGKGSLDIGMGKTLLKIGPIRFRTIYFIDSFCRYGELKIDNRFSNALVYAGGCLFNLITIFAINLLIIHSVLKPNVFFYQFVYFSTYYVFFALLPVRYSEKKSSDGLAIYKVLRYGERYEIDK</sequence>
<keyword id="KW-1003">Cell membrane</keyword>
<keyword id="KW-0472">Membrane</keyword>
<keyword id="KW-1185">Reference proteome</keyword>
<keyword id="KW-0812">Transmembrane</keyword>
<keyword id="KW-1133">Transmembrane helix</keyword>
<proteinExistence type="predicted"/>
<gene>
    <name type="primary">ywmF</name>
    <name type="ordered locus">BSU36680</name>
</gene>
<comment type="subcellular location">
    <subcellularLocation>
        <location evidence="2">Cell membrane</location>
        <topology evidence="2">Multi-pass membrane protein</topology>
    </subcellularLocation>
</comment>
<reference key="1">
    <citation type="journal article" date="1997" name="Microbiology">
        <title>The Bacillus subtilis genome from gerBC (311 degrees) to licR (334 degrees).</title>
        <authorList>
            <person name="Presecan E."/>
            <person name="Moszer I."/>
            <person name="Boursier L."/>
            <person name="Cruz Ramos H."/>
            <person name="De La Fuente V."/>
            <person name="Hullo M.-F."/>
            <person name="Lelong C."/>
            <person name="Schleich S."/>
            <person name="Sekowska A."/>
            <person name="Song B.H."/>
            <person name="Villani G."/>
            <person name="Kunst F."/>
            <person name="Danchin A."/>
            <person name="Glaser P."/>
        </authorList>
    </citation>
    <scope>NUCLEOTIDE SEQUENCE [GENOMIC DNA]</scope>
    <source>
        <strain>168</strain>
    </source>
</reference>
<reference key="2">
    <citation type="journal article" date="1997" name="Nature">
        <title>The complete genome sequence of the Gram-positive bacterium Bacillus subtilis.</title>
        <authorList>
            <person name="Kunst F."/>
            <person name="Ogasawara N."/>
            <person name="Moszer I."/>
            <person name="Albertini A.M."/>
            <person name="Alloni G."/>
            <person name="Azevedo V."/>
            <person name="Bertero M.G."/>
            <person name="Bessieres P."/>
            <person name="Bolotin A."/>
            <person name="Borchert S."/>
            <person name="Borriss R."/>
            <person name="Boursier L."/>
            <person name="Brans A."/>
            <person name="Braun M."/>
            <person name="Brignell S.C."/>
            <person name="Bron S."/>
            <person name="Brouillet S."/>
            <person name="Bruschi C.V."/>
            <person name="Caldwell B."/>
            <person name="Capuano V."/>
            <person name="Carter N.M."/>
            <person name="Choi S.-K."/>
            <person name="Codani J.-J."/>
            <person name="Connerton I.F."/>
            <person name="Cummings N.J."/>
            <person name="Daniel R.A."/>
            <person name="Denizot F."/>
            <person name="Devine K.M."/>
            <person name="Duesterhoeft A."/>
            <person name="Ehrlich S.D."/>
            <person name="Emmerson P.T."/>
            <person name="Entian K.-D."/>
            <person name="Errington J."/>
            <person name="Fabret C."/>
            <person name="Ferrari E."/>
            <person name="Foulger D."/>
            <person name="Fritz C."/>
            <person name="Fujita M."/>
            <person name="Fujita Y."/>
            <person name="Fuma S."/>
            <person name="Galizzi A."/>
            <person name="Galleron N."/>
            <person name="Ghim S.-Y."/>
            <person name="Glaser P."/>
            <person name="Goffeau A."/>
            <person name="Golightly E.J."/>
            <person name="Grandi G."/>
            <person name="Guiseppi G."/>
            <person name="Guy B.J."/>
            <person name="Haga K."/>
            <person name="Haiech J."/>
            <person name="Harwood C.R."/>
            <person name="Henaut A."/>
            <person name="Hilbert H."/>
            <person name="Holsappel S."/>
            <person name="Hosono S."/>
            <person name="Hullo M.-F."/>
            <person name="Itaya M."/>
            <person name="Jones L.-M."/>
            <person name="Joris B."/>
            <person name="Karamata D."/>
            <person name="Kasahara Y."/>
            <person name="Klaerr-Blanchard M."/>
            <person name="Klein C."/>
            <person name="Kobayashi Y."/>
            <person name="Koetter P."/>
            <person name="Koningstein G."/>
            <person name="Krogh S."/>
            <person name="Kumano M."/>
            <person name="Kurita K."/>
            <person name="Lapidus A."/>
            <person name="Lardinois S."/>
            <person name="Lauber J."/>
            <person name="Lazarevic V."/>
            <person name="Lee S.-M."/>
            <person name="Levine A."/>
            <person name="Liu H."/>
            <person name="Masuda S."/>
            <person name="Mauel C."/>
            <person name="Medigue C."/>
            <person name="Medina N."/>
            <person name="Mellado R.P."/>
            <person name="Mizuno M."/>
            <person name="Moestl D."/>
            <person name="Nakai S."/>
            <person name="Noback M."/>
            <person name="Noone D."/>
            <person name="O'Reilly M."/>
            <person name="Ogawa K."/>
            <person name="Ogiwara A."/>
            <person name="Oudega B."/>
            <person name="Park S.-H."/>
            <person name="Parro V."/>
            <person name="Pohl T.M."/>
            <person name="Portetelle D."/>
            <person name="Porwollik S."/>
            <person name="Prescott A.M."/>
            <person name="Presecan E."/>
            <person name="Pujic P."/>
            <person name="Purnelle B."/>
            <person name="Rapoport G."/>
            <person name="Rey M."/>
            <person name="Reynolds S."/>
            <person name="Rieger M."/>
            <person name="Rivolta C."/>
            <person name="Rocha E."/>
            <person name="Roche B."/>
            <person name="Rose M."/>
            <person name="Sadaie Y."/>
            <person name="Sato T."/>
            <person name="Scanlan E."/>
            <person name="Schleich S."/>
            <person name="Schroeter R."/>
            <person name="Scoffone F."/>
            <person name="Sekiguchi J."/>
            <person name="Sekowska A."/>
            <person name="Seror S.J."/>
            <person name="Serror P."/>
            <person name="Shin B.-S."/>
            <person name="Soldo B."/>
            <person name="Sorokin A."/>
            <person name="Tacconi E."/>
            <person name="Takagi T."/>
            <person name="Takahashi H."/>
            <person name="Takemaru K."/>
            <person name="Takeuchi M."/>
            <person name="Tamakoshi A."/>
            <person name="Tanaka T."/>
            <person name="Terpstra P."/>
            <person name="Tognoni A."/>
            <person name="Tosato V."/>
            <person name="Uchiyama S."/>
            <person name="Vandenbol M."/>
            <person name="Vannier F."/>
            <person name="Vassarotti A."/>
            <person name="Viari A."/>
            <person name="Wambutt R."/>
            <person name="Wedler E."/>
            <person name="Wedler H."/>
            <person name="Weitzenegger T."/>
            <person name="Winters P."/>
            <person name="Wipat A."/>
            <person name="Yamamoto H."/>
            <person name="Yamane K."/>
            <person name="Yasumoto K."/>
            <person name="Yata K."/>
            <person name="Yoshida K."/>
            <person name="Yoshikawa H.-F."/>
            <person name="Zumstein E."/>
            <person name="Yoshikawa H."/>
            <person name="Danchin A."/>
        </authorList>
    </citation>
    <scope>NUCLEOTIDE SEQUENCE [LARGE SCALE GENOMIC DNA]</scope>
    <source>
        <strain>168</strain>
    </source>
</reference>
<organism>
    <name type="scientific">Bacillus subtilis (strain 168)</name>
    <dbReference type="NCBI Taxonomy" id="224308"/>
    <lineage>
        <taxon>Bacteria</taxon>
        <taxon>Bacillati</taxon>
        <taxon>Bacillota</taxon>
        <taxon>Bacilli</taxon>
        <taxon>Bacillales</taxon>
        <taxon>Bacillaceae</taxon>
        <taxon>Bacillus</taxon>
    </lineage>
</organism>
<evidence type="ECO:0000255" key="1"/>
<evidence type="ECO:0000305" key="2"/>